<protein>
    <recommendedName>
        <fullName evidence="1">Cell division protein ZapB</fullName>
    </recommendedName>
</protein>
<sequence length="79" mass="9285">MSFEVFEKLEVKVQQAIDTITLLQMEIEELKEKNNTLTQEVQDAAGSREALVRENEQLKQEQHVWQDRLRALLGKMEEV</sequence>
<accession>A9R6B7</accession>
<organism>
    <name type="scientific">Yersinia pestis bv. Antiqua (strain Angola)</name>
    <dbReference type="NCBI Taxonomy" id="349746"/>
    <lineage>
        <taxon>Bacteria</taxon>
        <taxon>Pseudomonadati</taxon>
        <taxon>Pseudomonadota</taxon>
        <taxon>Gammaproteobacteria</taxon>
        <taxon>Enterobacterales</taxon>
        <taxon>Yersiniaceae</taxon>
        <taxon>Yersinia</taxon>
    </lineage>
</organism>
<comment type="function">
    <text evidence="1">Non-essential, abundant cell division factor that is required for proper Z-ring formation. It is recruited early to the divisome by direct interaction with FtsZ, stimulating Z-ring assembly and thereby promoting cell division earlier in the cell cycle. Its recruitment to the Z-ring requires functional FtsA or ZipA.</text>
</comment>
<comment type="subunit">
    <text evidence="1">Homodimer. The ends of the coiled-coil dimer bind to each other, forming polymers. Interacts with FtsZ.</text>
</comment>
<comment type="subcellular location">
    <subcellularLocation>
        <location evidence="1">Cytoplasm</location>
    </subcellularLocation>
    <text evidence="1">Localizes to the septum at mid-cell, in a FtsZ-like pattern.</text>
</comment>
<comment type="similarity">
    <text evidence="1">Belongs to the ZapB family.</text>
</comment>
<evidence type="ECO:0000255" key="1">
    <source>
        <dbReference type="HAMAP-Rule" id="MF_01196"/>
    </source>
</evidence>
<proteinExistence type="inferred from homology"/>
<dbReference type="EMBL" id="CP000901">
    <property type="protein sequence ID" value="ABX85201.1"/>
    <property type="molecule type" value="Genomic_DNA"/>
</dbReference>
<dbReference type="RefSeq" id="WP_002208953.1">
    <property type="nucleotide sequence ID" value="NZ_CP009935.1"/>
</dbReference>
<dbReference type="SMR" id="A9R6B7"/>
<dbReference type="GeneID" id="96663567"/>
<dbReference type="KEGG" id="ypg:YpAngola_A0102"/>
<dbReference type="PATRIC" id="fig|349746.12.peg.1046"/>
<dbReference type="GO" id="GO:0005737">
    <property type="term" value="C:cytoplasm"/>
    <property type="evidence" value="ECO:0007669"/>
    <property type="project" value="UniProtKB-SubCell"/>
</dbReference>
<dbReference type="GO" id="GO:0000917">
    <property type="term" value="P:division septum assembly"/>
    <property type="evidence" value="ECO:0007669"/>
    <property type="project" value="UniProtKB-KW"/>
</dbReference>
<dbReference type="GO" id="GO:0043093">
    <property type="term" value="P:FtsZ-dependent cytokinesis"/>
    <property type="evidence" value="ECO:0007669"/>
    <property type="project" value="UniProtKB-UniRule"/>
</dbReference>
<dbReference type="Gene3D" id="1.20.5.340">
    <property type="match status" value="1"/>
</dbReference>
<dbReference type="HAMAP" id="MF_01196">
    <property type="entry name" value="ZapB"/>
    <property type="match status" value="1"/>
</dbReference>
<dbReference type="InterPro" id="IPR009252">
    <property type="entry name" value="Cell_div_ZapB"/>
</dbReference>
<dbReference type="NCBIfam" id="NF011951">
    <property type="entry name" value="PRK15422.1"/>
    <property type="match status" value="1"/>
</dbReference>
<dbReference type="Pfam" id="PF06005">
    <property type="entry name" value="ZapB"/>
    <property type="match status" value="1"/>
</dbReference>
<reference key="1">
    <citation type="journal article" date="2010" name="J. Bacteriol.">
        <title>Genome sequence of the deep-rooted Yersinia pestis strain Angola reveals new insights into the evolution and pangenome of the plague bacterium.</title>
        <authorList>
            <person name="Eppinger M."/>
            <person name="Worsham P.L."/>
            <person name="Nikolich M.P."/>
            <person name="Riley D.R."/>
            <person name="Sebastian Y."/>
            <person name="Mou S."/>
            <person name="Achtman M."/>
            <person name="Lindler L.E."/>
            <person name="Ravel J."/>
        </authorList>
    </citation>
    <scope>NUCLEOTIDE SEQUENCE [LARGE SCALE GENOMIC DNA]</scope>
    <source>
        <strain>Angola</strain>
    </source>
</reference>
<keyword id="KW-0131">Cell cycle</keyword>
<keyword id="KW-0132">Cell division</keyword>
<keyword id="KW-0175">Coiled coil</keyword>
<keyword id="KW-0963">Cytoplasm</keyword>
<keyword id="KW-0717">Septation</keyword>
<gene>
    <name evidence="1" type="primary">zapB</name>
    <name type="ordered locus">YpAngola_A0102</name>
</gene>
<feature type="chain" id="PRO_1000138455" description="Cell division protein ZapB">
    <location>
        <begin position="1"/>
        <end position="79"/>
    </location>
</feature>
<feature type="coiled-coil region" evidence="1">
    <location>
        <begin position="6"/>
        <end position="78"/>
    </location>
</feature>
<name>ZAPB_YERPG</name>